<evidence type="ECO:0000250" key="1">
    <source>
        <dbReference type="UniProtKB" id="P0AGE9"/>
    </source>
</evidence>
<evidence type="ECO:0000269" key="2">
    <source>
    </source>
</evidence>
<evidence type="ECO:0000303" key="3">
    <source>
    </source>
</evidence>
<evidence type="ECO:0000305" key="4"/>
<evidence type="ECO:0000305" key="5">
    <source>
    </source>
</evidence>
<evidence type="ECO:0000312" key="6">
    <source>
        <dbReference type="EMBL" id="RJX24452.1"/>
    </source>
</evidence>
<dbReference type="EC" id="6.2.1.-" evidence="2"/>
<dbReference type="EMBL" id="QZKD01000037">
    <property type="protein sequence ID" value="RJX24452.1"/>
    <property type="molecule type" value="Genomic_DNA"/>
</dbReference>
<dbReference type="SMR" id="A0A3A6N9V6"/>
<dbReference type="Proteomes" id="UP000269641">
    <property type="component" value="Unassembled WGS sequence"/>
</dbReference>
<dbReference type="GO" id="GO:0009361">
    <property type="term" value="C:succinate-CoA ligase complex (ADP-forming)"/>
    <property type="evidence" value="ECO:0007669"/>
    <property type="project" value="TreeGrafter"/>
</dbReference>
<dbReference type="GO" id="GO:0000166">
    <property type="term" value="F:nucleotide binding"/>
    <property type="evidence" value="ECO:0007669"/>
    <property type="project" value="UniProtKB-KW"/>
</dbReference>
<dbReference type="GO" id="GO:0004775">
    <property type="term" value="F:succinate-CoA ligase (ADP-forming) activity"/>
    <property type="evidence" value="ECO:0007669"/>
    <property type="project" value="UniProtKB-EC"/>
</dbReference>
<dbReference type="GO" id="GO:0004776">
    <property type="term" value="F:succinate-CoA ligase (GDP-forming) activity"/>
    <property type="evidence" value="ECO:0007669"/>
    <property type="project" value="TreeGrafter"/>
</dbReference>
<dbReference type="GO" id="GO:0006099">
    <property type="term" value="P:tricarboxylic acid cycle"/>
    <property type="evidence" value="ECO:0007669"/>
    <property type="project" value="TreeGrafter"/>
</dbReference>
<dbReference type="FunFam" id="3.40.50.720:FF:000277">
    <property type="entry name" value="Succinate--CoA ligase [ADP-forming] subunit alpha"/>
    <property type="match status" value="1"/>
</dbReference>
<dbReference type="Gene3D" id="3.40.50.720">
    <property type="entry name" value="NAD(P)-binding Rossmann-like Domain"/>
    <property type="match status" value="1"/>
</dbReference>
<dbReference type="Gene3D" id="3.40.50.261">
    <property type="entry name" value="Succinyl-CoA synthetase domains"/>
    <property type="match status" value="1"/>
</dbReference>
<dbReference type="InterPro" id="IPR003781">
    <property type="entry name" value="CoA-bd"/>
</dbReference>
<dbReference type="InterPro" id="IPR005810">
    <property type="entry name" value="CoA_lig_alpha"/>
</dbReference>
<dbReference type="InterPro" id="IPR036291">
    <property type="entry name" value="NAD(P)-bd_dom_sf"/>
</dbReference>
<dbReference type="InterPro" id="IPR005811">
    <property type="entry name" value="SUCC_ACL_C"/>
</dbReference>
<dbReference type="InterPro" id="IPR016102">
    <property type="entry name" value="Succinyl-CoA_synth-like"/>
</dbReference>
<dbReference type="NCBIfam" id="NF004230">
    <property type="entry name" value="PRK05678.1"/>
    <property type="match status" value="1"/>
</dbReference>
<dbReference type="PANTHER" id="PTHR11117:SF2">
    <property type="entry name" value="SUCCINATE--COA LIGASE [ADP_GDP-FORMING] SUBUNIT ALPHA, MITOCHONDRIAL"/>
    <property type="match status" value="1"/>
</dbReference>
<dbReference type="PANTHER" id="PTHR11117">
    <property type="entry name" value="SUCCINYL-COA LIGASE SUBUNIT ALPHA"/>
    <property type="match status" value="1"/>
</dbReference>
<dbReference type="Pfam" id="PF02629">
    <property type="entry name" value="CoA_binding"/>
    <property type="match status" value="1"/>
</dbReference>
<dbReference type="Pfam" id="PF00549">
    <property type="entry name" value="Ligase_CoA"/>
    <property type="match status" value="1"/>
</dbReference>
<dbReference type="PIRSF" id="PIRSF001553">
    <property type="entry name" value="SucCS_alpha"/>
    <property type="match status" value="1"/>
</dbReference>
<dbReference type="PRINTS" id="PR01798">
    <property type="entry name" value="SCOASYNTHASE"/>
</dbReference>
<dbReference type="SMART" id="SM00881">
    <property type="entry name" value="CoA_binding"/>
    <property type="match status" value="1"/>
</dbReference>
<dbReference type="SUPFAM" id="SSF51735">
    <property type="entry name" value="NAD(P)-binding Rossmann-fold domains"/>
    <property type="match status" value="1"/>
</dbReference>
<dbReference type="SUPFAM" id="SSF52210">
    <property type="entry name" value="Succinyl-CoA synthetase domains"/>
    <property type="match status" value="1"/>
</dbReference>
<keyword id="KW-0119">Carbohydrate metabolism</keyword>
<keyword id="KW-0436">Ligase</keyword>
<keyword id="KW-0547">Nucleotide-binding</keyword>
<organism>
    <name type="scientific">Acholeplasma sp</name>
    <dbReference type="NCBI Taxonomy" id="33015"/>
    <lineage>
        <taxon>Bacteria</taxon>
        <taxon>Bacillati</taxon>
        <taxon>Mycoplasmatota</taxon>
        <taxon>Mollicutes</taxon>
        <taxon>Acholeplasmatales</taxon>
        <taxon>Acholeplasmataceae</taxon>
        <taxon>Acholeplasma</taxon>
    </lineage>
</organism>
<name>SQWL_ACHSX</name>
<sequence>MSIFIDRETKVCVQGITGSEGSFWTKHMIDLGTDVICGVTPGKEGQMVEGIPVYHSVKNALKHHKIDATMLFVPPKMTKDAVFEALEAGIKKIVTIADGIPLHEMMEIRQRALEENAFVVGGNTSGVISPKEAMMGSFPHWIERVYKKGSIGVMTRSGSLTNEVTAMIVEAGYGVSSLIGVGGDPVPGARFAEFLPLYQKDPETKAVVIIGELGGTMEEEVAETILKGTFTKPLVAFLGGRTAPKGQKMGHAGAIITGGKGSVQNKIEMLEKAGAKVADRPRKVGKLLEELGVTKD</sequence>
<comment type="function">
    <text evidence="2">Part of a variant of the sulfo-TK pathway, a D-sulfoquinovose degradation pathway that produces sulfoacetate (PubMed:37404184). Hydrolyzes sulfoacetyl-coenzyme A (sulfoacetyl-CoA) to produce sulfoacetate and CoA coupled with the phosphorylation of ADP to generate ATP (PubMed:37404184). Cannot use succinate, acetate or 3-hydroxypropionate, and shows only residual activities with malonate and 3-sulfopropanoate (PubMed:37404184).</text>
</comment>
<comment type="catalytic activity">
    <reaction evidence="2">
        <text>sulfoacetate + ATP + CoA = sulfoacetyl-CoA + ADP + phosphate</text>
        <dbReference type="Rhea" id="RHEA:76683"/>
        <dbReference type="ChEBI" id="CHEBI:30616"/>
        <dbReference type="ChEBI" id="CHEBI:43474"/>
        <dbReference type="ChEBI" id="CHEBI:57287"/>
        <dbReference type="ChEBI" id="CHEBI:58824"/>
        <dbReference type="ChEBI" id="CHEBI:61994"/>
        <dbReference type="ChEBI" id="CHEBI:456216"/>
    </reaction>
    <physiologicalReaction direction="right-to-left" evidence="2">
        <dbReference type="Rhea" id="RHEA:76685"/>
    </physiologicalReaction>
</comment>
<comment type="biophysicochemical properties">
    <kinetics>
        <KM evidence="2">0.15 mM for sulfoacetate</KM>
        <KM evidence="2">0.14 mM for ATP</KM>
        <KM evidence="2">0.07 mM for CoA</KM>
        <text evidence="2">kcat is 1.86 sec(-1) with sulfoacetate as substrate. kcat is 1.68 sec(-1) with ATP as substrate. kcat is 2.07 sec(-1) with CoA as substrate.</text>
    </kinetics>
    <phDependence>
        <text evidence="2">Optimum pH is 7.5.</text>
    </phDependence>
</comment>
<comment type="subunit">
    <text evidence="5">Forms a complex with SqwK.</text>
</comment>
<comment type="similarity">
    <text evidence="4">Belongs to the succinate/malate CoA ligase alpha subunit family.</text>
</comment>
<accession>A0A3A6N9V6</accession>
<protein>
    <recommendedName>
        <fullName evidence="3">ADP-forming sulfoacetate-CoA ligase subunit SqwL</fullName>
        <ecNumber evidence="2">6.2.1.-</ecNumber>
    </recommendedName>
    <alternativeName>
        <fullName evidence="4">ADP-forming sulfoacetate-CoA ligase subunit alpha</fullName>
    </alternativeName>
</protein>
<reference key="1">
    <citation type="journal article" date="2017" name="ISME J.">
        <title>Energy and carbon metabolisms in a deep terrestrial subsurface fluid microbial community.</title>
        <authorList>
            <person name="Momper L."/>
            <person name="Jungbluth S.P."/>
            <person name="Lee M.D."/>
            <person name="Amend J.P."/>
        </authorList>
    </citation>
    <scope>NUCLEOTIDE SEQUENCE [LARGE SCALE GENOMIC DNA]</scope>
    <source>
        <strain>SURF_22</strain>
    </source>
</reference>
<reference key="2">
    <citation type="journal article" date="2023" name="Appl. Environ. Microbiol.">
        <title>A variant of the sulfoglycolytic transketolase pathway for the degradation of sulfoquinovose into sulfoacetate.</title>
        <authorList>
            <person name="Chu R."/>
            <person name="Wei Y."/>
            <person name="Liu J."/>
            <person name="Li B."/>
            <person name="Zhang J."/>
            <person name="Zhou Y."/>
            <person name="Du Y."/>
            <person name="Zhang Y."/>
        </authorList>
    </citation>
    <scope>FUNCTION</scope>
    <scope>CATALYTIC ACTIVITY</scope>
    <scope>BIOPHYSICOCHEMICAL PROPERTIES</scope>
</reference>
<proteinExistence type="evidence at protein level"/>
<feature type="chain" id="PRO_0000459084" description="ADP-forming sulfoacetate-CoA ligase subunit SqwL">
    <location>
        <begin position="1"/>
        <end position="296"/>
    </location>
</feature>
<feature type="active site" description="Tele-phosphohistidine intermediate" evidence="1">
    <location>
        <position position="251"/>
    </location>
</feature>
<feature type="binding site" evidence="1">
    <location>
        <begin position="17"/>
        <end position="20"/>
    </location>
    <ligand>
        <name>CoA</name>
        <dbReference type="ChEBI" id="CHEBI:57287"/>
    </ligand>
</feature>
<feature type="binding site" evidence="1">
    <location>
        <position position="43"/>
    </location>
    <ligand>
        <name>CoA</name>
        <dbReference type="ChEBI" id="CHEBI:57287"/>
    </ligand>
</feature>
<feature type="binding site" evidence="1">
    <location>
        <begin position="96"/>
        <end position="98"/>
    </location>
    <ligand>
        <name>CoA</name>
        <dbReference type="ChEBI" id="CHEBI:57287"/>
    </ligand>
</feature>
<gene>
    <name evidence="3" type="primary">sqwL</name>
    <name evidence="6" type="ORF">C4537_06700</name>
</gene>